<organism>
    <name type="scientific">Actinobacillus pleuropneumoniae serotype 5b (strain L20)</name>
    <dbReference type="NCBI Taxonomy" id="416269"/>
    <lineage>
        <taxon>Bacteria</taxon>
        <taxon>Pseudomonadati</taxon>
        <taxon>Pseudomonadota</taxon>
        <taxon>Gammaproteobacteria</taxon>
        <taxon>Pasteurellales</taxon>
        <taxon>Pasteurellaceae</taxon>
        <taxon>Actinobacillus</taxon>
    </lineage>
</organism>
<protein>
    <recommendedName>
        <fullName evidence="1">Acetate kinase</fullName>
        <ecNumber evidence="1">2.7.2.1</ecNumber>
    </recommendedName>
    <alternativeName>
        <fullName evidence="1">Acetokinase</fullName>
    </alternativeName>
</protein>
<evidence type="ECO:0000255" key="1">
    <source>
        <dbReference type="HAMAP-Rule" id="MF_00020"/>
    </source>
</evidence>
<feature type="chain" id="PRO_1000002204" description="Acetate kinase">
    <location>
        <begin position="1"/>
        <end position="402"/>
    </location>
</feature>
<feature type="active site" description="Proton donor/acceptor" evidence="1">
    <location>
        <position position="148"/>
    </location>
</feature>
<feature type="binding site" evidence="1">
    <location>
        <position position="10"/>
    </location>
    <ligand>
        <name>Mg(2+)</name>
        <dbReference type="ChEBI" id="CHEBI:18420"/>
    </ligand>
</feature>
<feature type="binding site" evidence="1">
    <location>
        <position position="17"/>
    </location>
    <ligand>
        <name>ATP</name>
        <dbReference type="ChEBI" id="CHEBI:30616"/>
    </ligand>
</feature>
<feature type="binding site" evidence="1">
    <location>
        <position position="89"/>
    </location>
    <ligand>
        <name>substrate</name>
    </ligand>
</feature>
<feature type="binding site" evidence="1">
    <location>
        <begin position="208"/>
        <end position="212"/>
    </location>
    <ligand>
        <name>ATP</name>
        <dbReference type="ChEBI" id="CHEBI:30616"/>
    </ligand>
</feature>
<feature type="binding site" evidence="1">
    <location>
        <begin position="283"/>
        <end position="285"/>
    </location>
    <ligand>
        <name>ATP</name>
        <dbReference type="ChEBI" id="CHEBI:30616"/>
    </ligand>
</feature>
<feature type="binding site" evidence="1">
    <location>
        <begin position="334"/>
        <end position="338"/>
    </location>
    <ligand>
        <name>ATP</name>
        <dbReference type="ChEBI" id="CHEBI:30616"/>
    </ligand>
</feature>
<feature type="binding site" evidence="1">
    <location>
        <position position="389"/>
    </location>
    <ligand>
        <name>Mg(2+)</name>
        <dbReference type="ChEBI" id="CHEBI:18420"/>
    </ligand>
</feature>
<feature type="site" description="Transition state stabilizer" evidence="1">
    <location>
        <position position="180"/>
    </location>
</feature>
<feature type="site" description="Transition state stabilizer" evidence="1">
    <location>
        <position position="241"/>
    </location>
</feature>
<accession>A3N011</accession>
<proteinExistence type="inferred from homology"/>
<sequence length="402" mass="43583">MSKNLILILNCGSSSLKFAVLDPKTGDEKLSGLAEAFNLEDARIKWKLHGEKGNADLGAGAAHSEALTFIANELLSEELRSSIGAIGHRIVHGGEQFTSSVVINDDVVKGIEHAIQFAPLHNPAHLIGIKEAFRIFPELKEKNVAVFDTAFHQTMPEEAFLYALPYKLYKEHGIRRYGAHGTSHLFITSQVAELAGKPVDQTNAIICHLGNGGSVSVVRNGKCIDTSMGLTPLEGLVMGTRSGDIDPAIVFYLYKNLGMSMEQIEDTLVKKSGLLGLTEVTSDCRYAEDNYEDASKPEAKRALDVYSYRLAKYIGAYMAILGDDHLDAIAFTGGIGENSGHVRELALNHLKLFGVKLDVERNLAARFGKSGVITADDSTFKAVVIPTNEELVIAQDTAKLAL</sequence>
<keyword id="KW-0067">ATP-binding</keyword>
<keyword id="KW-0963">Cytoplasm</keyword>
<keyword id="KW-0418">Kinase</keyword>
<keyword id="KW-0460">Magnesium</keyword>
<keyword id="KW-0479">Metal-binding</keyword>
<keyword id="KW-0547">Nucleotide-binding</keyword>
<keyword id="KW-1185">Reference proteome</keyword>
<keyword id="KW-0808">Transferase</keyword>
<gene>
    <name evidence="1" type="primary">ackA</name>
    <name type="ordered locus">APL_0645</name>
</gene>
<dbReference type="EC" id="2.7.2.1" evidence="1"/>
<dbReference type="EMBL" id="CP000569">
    <property type="protein sequence ID" value="ABN73747.1"/>
    <property type="molecule type" value="Genomic_DNA"/>
</dbReference>
<dbReference type="RefSeq" id="WP_011848442.1">
    <property type="nucleotide sequence ID" value="NC_009053.1"/>
</dbReference>
<dbReference type="SMR" id="A3N011"/>
<dbReference type="STRING" id="416269.APL_0645"/>
<dbReference type="EnsemblBacteria" id="ABN73747">
    <property type="protein sequence ID" value="ABN73747"/>
    <property type="gene ID" value="APL_0645"/>
</dbReference>
<dbReference type="KEGG" id="apl:APL_0645"/>
<dbReference type="PATRIC" id="fig|416269.6.peg.676"/>
<dbReference type="eggNOG" id="COG0282">
    <property type="taxonomic scope" value="Bacteria"/>
</dbReference>
<dbReference type="HOGENOM" id="CLU_020352_0_1_6"/>
<dbReference type="UniPathway" id="UPA00340">
    <property type="reaction ID" value="UER00458"/>
</dbReference>
<dbReference type="Proteomes" id="UP000001432">
    <property type="component" value="Chromosome"/>
</dbReference>
<dbReference type="GO" id="GO:0005829">
    <property type="term" value="C:cytosol"/>
    <property type="evidence" value="ECO:0007669"/>
    <property type="project" value="TreeGrafter"/>
</dbReference>
<dbReference type="GO" id="GO:0008776">
    <property type="term" value="F:acetate kinase activity"/>
    <property type="evidence" value="ECO:0007669"/>
    <property type="project" value="UniProtKB-UniRule"/>
</dbReference>
<dbReference type="GO" id="GO:0005524">
    <property type="term" value="F:ATP binding"/>
    <property type="evidence" value="ECO:0007669"/>
    <property type="project" value="UniProtKB-KW"/>
</dbReference>
<dbReference type="GO" id="GO:0000287">
    <property type="term" value="F:magnesium ion binding"/>
    <property type="evidence" value="ECO:0007669"/>
    <property type="project" value="UniProtKB-UniRule"/>
</dbReference>
<dbReference type="GO" id="GO:0006083">
    <property type="term" value="P:acetate metabolic process"/>
    <property type="evidence" value="ECO:0007669"/>
    <property type="project" value="TreeGrafter"/>
</dbReference>
<dbReference type="GO" id="GO:0006085">
    <property type="term" value="P:acetyl-CoA biosynthetic process"/>
    <property type="evidence" value="ECO:0007669"/>
    <property type="project" value="UniProtKB-UniRule"/>
</dbReference>
<dbReference type="CDD" id="cd24010">
    <property type="entry name" value="ASKHA_NBD_AcK_PK"/>
    <property type="match status" value="1"/>
</dbReference>
<dbReference type="FunFam" id="3.30.420.40:FF:000041">
    <property type="entry name" value="Acetate kinase"/>
    <property type="match status" value="1"/>
</dbReference>
<dbReference type="FunFam" id="3.30.420.40:FF:000042">
    <property type="entry name" value="Acetate kinase"/>
    <property type="match status" value="1"/>
</dbReference>
<dbReference type="Gene3D" id="3.30.420.40">
    <property type="match status" value="2"/>
</dbReference>
<dbReference type="HAMAP" id="MF_00020">
    <property type="entry name" value="Acetate_kinase"/>
    <property type="match status" value="1"/>
</dbReference>
<dbReference type="InterPro" id="IPR004372">
    <property type="entry name" value="Ac/propionate_kinase"/>
</dbReference>
<dbReference type="InterPro" id="IPR000890">
    <property type="entry name" value="Aliphatic_acid_kin_short-chain"/>
</dbReference>
<dbReference type="InterPro" id="IPR023865">
    <property type="entry name" value="Aliphatic_acid_kinase_CS"/>
</dbReference>
<dbReference type="InterPro" id="IPR043129">
    <property type="entry name" value="ATPase_NBD"/>
</dbReference>
<dbReference type="NCBIfam" id="TIGR00016">
    <property type="entry name" value="ackA"/>
    <property type="match status" value="1"/>
</dbReference>
<dbReference type="PANTHER" id="PTHR21060">
    <property type="entry name" value="ACETATE KINASE"/>
    <property type="match status" value="1"/>
</dbReference>
<dbReference type="PANTHER" id="PTHR21060:SF21">
    <property type="entry name" value="ACETATE KINASE"/>
    <property type="match status" value="1"/>
</dbReference>
<dbReference type="Pfam" id="PF00871">
    <property type="entry name" value="Acetate_kinase"/>
    <property type="match status" value="1"/>
</dbReference>
<dbReference type="PIRSF" id="PIRSF000722">
    <property type="entry name" value="Acetate_prop_kin"/>
    <property type="match status" value="1"/>
</dbReference>
<dbReference type="PRINTS" id="PR00471">
    <property type="entry name" value="ACETATEKNASE"/>
</dbReference>
<dbReference type="SUPFAM" id="SSF53067">
    <property type="entry name" value="Actin-like ATPase domain"/>
    <property type="match status" value="2"/>
</dbReference>
<dbReference type="PROSITE" id="PS01075">
    <property type="entry name" value="ACETATE_KINASE_1"/>
    <property type="match status" value="1"/>
</dbReference>
<dbReference type="PROSITE" id="PS01076">
    <property type="entry name" value="ACETATE_KINASE_2"/>
    <property type="match status" value="1"/>
</dbReference>
<comment type="function">
    <text evidence="1">Catalyzes the formation of acetyl phosphate from acetate and ATP. Can also catalyze the reverse reaction.</text>
</comment>
<comment type="catalytic activity">
    <reaction evidence="1">
        <text>acetate + ATP = acetyl phosphate + ADP</text>
        <dbReference type="Rhea" id="RHEA:11352"/>
        <dbReference type="ChEBI" id="CHEBI:22191"/>
        <dbReference type="ChEBI" id="CHEBI:30089"/>
        <dbReference type="ChEBI" id="CHEBI:30616"/>
        <dbReference type="ChEBI" id="CHEBI:456216"/>
        <dbReference type="EC" id="2.7.2.1"/>
    </reaction>
</comment>
<comment type="cofactor">
    <cofactor evidence="1">
        <name>Mg(2+)</name>
        <dbReference type="ChEBI" id="CHEBI:18420"/>
    </cofactor>
    <cofactor evidence="1">
        <name>Mn(2+)</name>
        <dbReference type="ChEBI" id="CHEBI:29035"/>
    </cofactor>
    <text evidence="1">Mg(2+). Can also accept Mn(2+).</text>
</comment>
<comment type="pathway">
    <text evidence="1">Metabolic intermediate biosynthesis; acetyl-CoA biosynthesis; acetyl-CoA from acetate: step 1/2.</text>
</comment>
<comment type="subunit">
    <text evidence="1">Homodimer.</text>
</comment>
<comment type="subcellular location">
    <subcellularLocation>
        <location evidence="1">Cytoplasm</location>
    </subcellularLocation>
</comment>
<comment type="similarity">
    <text evidence="1">Belongs to the acetokinase family.</text>
</comment>
<name>ACKA_ACTP2</name>
<reference key="1">
    <citation type="journal article" date="2008" name="J. Bacteriol.">
        <title>The complete genome sequence of Actinobacillus pleuropneumoniae L20 (serotype 5b).</title>
        <authorList>
            <person name="Foote S.J."/>
            <person name="Bosse J.T."/>
            <person name="Bouevitch A.B."/>
            <person name="Langford P.R."/>
            <person name="Young N.M."/>
            <person name="Nash J.H.E."/>
        </authorList>
    </citation>
    <scope>NUCLEOTIDE SEQUENCE [LARGE SCALE GENOMIC DNA]</scope>
    <source>
        <strain>L20</strain>
    </source>
</reference>